<proteinExistence type="inferred from homology"/>
<keyword id="KW-0997">Cell inner membrane</keyword>
<keyword id="KW-1003">Cell membrane</keyword>
<keyword id="KW-0963">Cytoplasm</keyword>
<keyword id="KW-0342">GTP-binding</keyword>
<keyword id="KW-0378">Hydrolase</keyword>
<keyword id="KW-0472">Membrane</keyword>
<keyword id="KW-0547">Nucleotide-binding</keyword>
<keyword id="KW-0675">Receptor</keyword>
<keyword id="KW-1185">Reference proteome</keyword>
<reference key="1">
    <citation type="journal article" date="1997" name="Nature">
        <title>The complete genome sequence of the gastric pathogen Helicobacter pylori.</title>
        <authorList>
            <person name="Tomb J.-F."/>
            <person name="White O."/>
            <person name="Kerlavage A.R."/>
            <person name="Clayton R.A."/>
            <person name="Sutton G.G."/>
            <person name="Fleischmann R.D."/>
            <person name="Ketchum K.A."/>
            <person name="Klenk H.-P."/>
            <person name="Gill S.R."/>
            <person name="Dougherty B.A."/>
            <person name="Nelson K.E."/>
            <person name="Quackenbush J."/>
            <person name="Zhou L."/>
            <person name="Kirkness E.F."/>
            <person name="Peterson S.N."/>
            <person name="Loftus B.J."/>
            <person name="Richardson D.L."/>
            <person name="Dodson R.J."/>
            <person name="Khalak H.G."/>
            <person name="Glodek A."/>
            <person name="McKenney K."/>
            <person name="FitzGerald L.M."/>
            <person name="Lee N."/>
            <person name="Adams M.D."/>
            <person name="Hickey E.K."/>
            <person name="Berg D.E."/>
            <person name="Gocayne J.D."/>
            <person name="Utterback T.R."/>
            <person name="Peterson J.D."/>
            <person name="Kelley J.M."/>
            <person name="Cotton M.D."/>
            <person name="Weidman J.F."/>
            <person name="Fujii C."/>
            <person name="Bowman C."/>
            <person name="Watthey L."/>
            <person name="Wallin E."/>
            <person name="Hayes W.S."/>
            <person name="Borodovsky M."/>
            <person name="Karp P.D."/>
            <person name="Smith H.O."/>
            <person name="Fraser C.M."/>
            <person name="Venter J.C."/>
        </authorList>
    </citation>
    <scope>NUCLEOTIDE SEQUENCE [LARGE SCALE GENOMIC DNA]</scope>
    <source>
        <strain>ATCC 700392 / 26695</strain>
    </source>
</reference>
<name>FTSY_HELPY</name>
<accession>O25458</accession>
<feature type="chain" id="PRO_0000101133" description="Signal recognition particle receptor FtsY">
    <location>
        <begin position="1"/>
        <end position="293"/>
    </location>
</feature>
<feature type="binding site" evidence="1">
    <location>
        <begin position="93"/>
        <end position="100"/>
    </location>
    <ligand>
        <name>GTP</name>
        <dbReference type="ChEBI" id="CHEBI:37565"/>
    </ligand>
</feature>
<feature type="binding site" evidence="1">
    <location>
        <begin position="175"/>
        <end position="179"/>
    </location>
    <ligand>
        <name>GTP</name>
        <dbReference type="ChEBI" id="CHEBI:37565"/>
    </ligand>
</feature>
<feature type="binding site" evidence="1">
    <location>
        <begin position="239"/>
        <end position="242"/>
    </location>
    <ligand>
        <name>GTP</name>
        <dbReference type="ChEBI" id="CHEBI:37565"/>
    </ligand>
</feature>
<evidence type="ECO:0000255" key="1">
    <source>
        <dbReference type="HAMAP-Rule" id="MF_00920"/>
    </source>
</evidence>
<organism>
    <name type="scientific">Helicobacter pylori (strain ATCC 700392 / 26695)</name>
    <name type="common">Campylobacter pylori</name>
    <dbReference type="NCBI Taxonomy" id="85962"/>
    <lineage>
        <taxon>Bacteria</taxon>
        <taxon>Pseudomonadati</taxon>
        <taxon>Campylobacterota</taxon>
        <taxon>Epsilonproteobacteria</taxon>
        <taxon>Campylobacterales</taxon>
        <taxon>Helicobacteraceae</taxon>
        <taxon>Helicobacter</taxon>
    </lineage>
</organism>
<sequence>MFNFFKKIVNKIKGEEAKEKKRQSVPKEELEEILIGFDIQYDLIESLLKHLGDLITPKQLEVALLRFVRGDSYYDKTRLKTITTKPLVHLIVGVNGAGKTTTIAKLAKLSLKQHKKALLGAGDTFRAAAVKQLQLWGEKLNIQVISAKEGSDPSSLAYNTIESAIAKNIDEVFIDTAGRLHNQTNLKNELSKIARTCSKVLKDAPFYKFLILDGTQGSSGLTQAKIFHETLALDGVIMTKLDGTSKGGAILSVLYELKLPILYLGMGEKEDDLIAFDEERFIEDLVDAVFVGQ</sequence>
<dbReference type="EC" id="3.6.5.4" evidence="1"/>
<dbReference type="EMBL" id="AE000511">
    <property type="protein sequence ID" value="AAD07809.1"/>
    <property type="molecule type" value="Genomic_DNA"/>
</dbReference>
<dbReference type="PIR" id="C64615">
    <property type="entry name" value="C64615"/>
</dbReference>
<dbReference type="RefSeq" id="NP_207556.1">
    <property type="nucleotide sequence ID" value="NC_000915.1"/>
</dbReference>
<dbReference type="RefSeq" id="WP_000481557.1">
    <property type="nucleotide sequence ID" value="NC_018939.1"/>
</dbReference>
<dbReference type="SMR" id="O25458"/>
<dbReference type="FunCoup" id="O25458">
    <property type="interactions" value="385"/>
</dbReference>
<dbReference type="STRING" id="85962.HP_0763"/>
<dbReference type="PaxDb" id="85962-C694_03925"/>
<dbReference type="EnsemblBacteria" id="AAD07809">
    <property type="protein sequence ID" value="AAD07809"/>
    <property type="gene ID" value="HP_0763"/>
</dbReference>
<dbReference type="KEGG" id="heo:C694_03925"/>
<dbReference type="KEGG" id="hpy:HP_0763"/>
<dbReference type="PATRIC" id="fig|85962.47.peg.815"/>
<dbReference type="eggNOG" id="COG0552">
    <property type="taxonomic scope" value="Bacteria"/>
</dbReference>
<dbReference type="InParanoid" id="O25458"/>
<dbReference type="OrthoDB" id="9804720at2"/>
<dbReference type="PhylomeDB" id="O25458"/>
<dbReference type="Proteomes" id="UP000000429">
    <property type="component" value="Chromosome"/>
</dbReference>
<dbReference type="GO" id="GO:0005737">
    <property type="term" value="C:cytoplasm"/>
    <property type="evidence" value="ECO:0007669"/>
    <property type="project" value="UniProtKB-SubCell"/>
</dbReference>
<dbReference type="GO" id="GO:0005886">
    <property type="term" value="C:plasma membrane"/>
    <property type="evidence" value="ECO:0000318"/>
    <property type="project" value="GO_Central"/>
</dbReference>
<dbReference type="GO" id="GO:0005525">
    <property type="term" value="F:GTP binding"/>
    <property type="evidence" value="ECO:0007669"/>
    <property type="project" value="UniProtKB-UniRule"/>
</dbReference>
<dbReference type="GO" id="GO:0003924">
    <property type="term" value="F:GTPase activity"/>
    <property type="evidence" value="ECO:0000318"/>
    <property type="project" value="GO_Central"/>
</dbReference>
<dbReference type="GO" id="GO:0005047">
    <property type="term" value="F:signal recognition particle binding"/>
    <property type="evidence" value="ECO:0000318"/>
    <property type="project" value="GO_Central"/>
</dbReference>
<dbReference type="GO" id="GO:0006605">
    <property type="term" value="P:protein targeting"/>
    <property type="evidence" value="ECO:0000318"/>
    <property type="project" value="GO_Central"/>
</dbReference>
<dbReference type="GO" id="GO:0006614">
    <property type="term" value="P:SRP-dependent cotranslational protein targeting to membrane"/>
    <property type="evidence" value="ECO:0007669"/>
    <property type="project" value="InterPro"/>
</dbReference>
<dbReference type="CDD" id="cd17874">
    <property type="entry name" value="FtsY"/>
    <property type="match status" value="1"/>
</dbReference>
<dbReference type="FunFam" id="3.40.50.300:FF:000053">
    <property type="entry name" value="Signal recognition particle receptor FtsY"/>
    <property type="match status" value="1"/>
</dbReference>
<dbReference type="Gene3D" id="3.40.50.300">
    <property type="entry name" value="P-loop containing nucleotide triphosphate hydrolases"/>
    <property type="match status" value="1"/>
</dbReference>
<dbReference type="Gene3D" id="1.20.120.140">
    <property type="entry name" value="Signal recognition particle SRP54, nucleotide-binding domain"/>
    <property type="match status" value="1"/>
</dbReference>
<dbReference type="HAMAP" id="MF_00920">
    <property type="entry name" value="FtsY"/>
    <property type="match status" value="1"/>
</dbReference>
<dbReference type="InterPro" id="IPR027417">
    <property type="entry name" value="P-loop_NTPase"/>
</dbReference>
<dbReference type="InterPro" id="IPR004390">
    <property type="entry name" value="SR_rcpt_FtsY"/>
</dbReference>
<dbReference type="InterPro" id="IPR000897">
    <property type="entry name" value="SRP54_GTPase_dom"/>
</dbReference>
<dbReference type="InterPro" id="IPR042101">
    <property type="entry name" value="SRP54_N_sf"/>
</dbReference>
<dbReference type="NCBIfam" id="TIGR00064">
    <property type="entry name" value="ftsY"/>
    <property type="match status" value="1"/>
</dbReference>
<dbReference type="PANTHER" id="PTHR43134">
    <property type="entry name" value="SIGNAL RECOGNITION PARTICLE RECEPTOR SUBUNIT ALPHA"/>
    <property type="match status" value="1"/>
</dbReference>
<dbReference type="PANTHER" id="PTHR43134:SF1">
    <property type="entry name" value="SIGNAL RECOGNITION PARTICLE RECEPTOR SUBUNIT ALPHA"/>
    <property type="match status" value="1"/>
</dbReference>
<dbReference type="Pfam" id="PF00448">
    <property type="entry name" value="SRP54"/>
    <property type="match status" value="1"/>
</dbReference>
<dbReference type="SMART" id="SM00962">
    <property type="entry name" value="SRP54"/>
    <property type="match status" value="1"/>
</dbReference>
<dbReference type="SUPFAM" id="SSF52540">
    <property type="entry name" value="P-loop containing nucleoside triphosphate hydrolases"/>
    <property type="match status" value="1"/>
</dbReference>
<dbReference type="PROSITE" id="PS00300">
    <property type="entry name" value="SRP54"/>
    <property type="match status" value="1"/>
</dbReference>
<gene>
    <name evidence="1" type="primary">ftsY</name>
    <name type="ordered locus">HP_0763</name>
</gene>
<comment type="function">
    <text evidence="1">Involved in targeting and insertion of nascent membrane proteins into the cytoplasmic membrane. Acts as a receptor for the complex formed by the signal recognition particle (SRP) and the ribosome-nascent chain (RNC). Interaction with SRP-RNC leads to the transfer of the RNC complex to the Sec translocase for insertion into the membrane, the hydrolysis of GTP by both Ffh and FtsY, and the dissociation of the SRP-FtsY complex into the individual components.</text>
</comment>
<comment type="catalytic activity">
    <reaction evidence="1">
        <text>GTP + H2O = GDP + phosphate + H(+)</text>
        <dbReference type="Rhea" id="RHEA:19669"/>
        <dbReference type="ChEBI" id="CHEBI:15377"/>
        <dbReference type="ChEBI" id="CHEBI:15378"/>
        <dbReference type="ChEBI" id="CHEBI:37565"/>
        <dbReference type="ChEBI" id="CHEBI:43474"/>
        <dbReference type="ChEBI" id="CHEBI:58189"/>
        <dbReference type="EC" id="3.6.5.4"/>
    </reaction>
</comment>
<comment type="subunit">
    <text evidence="1">Part of the signal recognition particle protein translocation system, which is composed of SRP and FtsY. SRP is a ribonucleoprotein composed of Ffh and a 4.5S RNA molecule.</text>
</comment>
<comment type="subcellular location">
    <subcellularLocation>
        <location>Cell inner membrane</location>
        <topology>Peripheral membrane protein</topology>
        <orientation>Cytoplasmic side</orientation>
    </subcellularLocation>
    <subcellularLocation>
        <location evidence="1">Cytoplasm</location>
    </subcellularLocation>
</comment>
<comment type="similarity">
    <text evidence="1">Belongs to the GTP-binding SRP family. FtsY subfamily.</text>
</comment>
<protein>
    <recommendedName>
        <fullName evidence="1">Signal recognition particle receptor FtsY</fullName>
        <shortName evidence="1">SRP receptor</shortName>
        <ecNumber evidence="1">3.6.5.4</ecNumber>
    </recommendedName>
</protein>